<sequence>MAGRSGDSDENLLKAIRLIKFLYQSNPPPSPEGTRQARRNRRRRWRARQRQIHSIGERIICTFLGRPEEPVPLQLPPLERLNLNCSEDCGTSGTQGVGSPQIPVEPPAVLESGTEE</sequence>
<keyword id="KW-0014">AIDS</keyword>
<keyword id="KW-1035">Host cytoplasm</keyword>
<keyword id="KW-1048">Host nucleus</keyword>
<keyword id="KW-0945">Host-virus interaction</keyword>
<keyword id="KW-0488">Methylation</keyword>
<keyword id="KW-0509">mRNA transport</keyword>
<keyword id="KW-0597">Phosphoprotein</keyword>
<keyword id="KW-0694">RNA-binding</keyword>
<keyword id="KW-0813">Transport</keyword>
<name>REV_HV1ND</name>
<evidence type="ECO:0000255" key="1">
    <source>
        <dbReference type="HAMAP-Rule" id="MF_04077"/>
    </source>
</evidence>
<evidence type="ECO:0000256" key="2">
    <source>
        <dbReference type="SAM" id="MobiDB-lite"/>
    </source>
</evidence>
<dbReference type="EMBL" id="M27323">
    <property type="protein sequence ID" value="AAA44867.1"/>
    <property type="molecule type" value="Genomic_DNA"/>
</dbReference>
<dbReference type="Proteomes" id="UP000172620">
    <property type="component" value="Segment"/>
</dbReference>
<dbReference type="GO" id="GO:0030430">
    <property type="term" value="C:host cell cytoplasm"/>
    <property type="evidence" value="ECO:0007669"/>
    <property type="project" value="UniProtKB-SubCell"/>
</dbReference>
<dbReference type="GO" id="GO:0044196">
    <property type="term" value="C:host cell nucleolus"/>
    <property type="evidence" value="ECO:0007669"/>
    <property type="project" value="UniProtKB-SubCell"/>
</dbReference>
<dbReference type="GO" id="GO:0003700">
    <property type="term" value="F:DNA-binding transcription factor activity"/>
    <property type="evidence" value="ECO:0007669"/>
    <property type="project" value="UniProtKB-UniRule"/>
</dbReference>
<dbReference type="GO" id="GO:0003723">
    <property type="term" value="F:RNA binding"/>
    <property type="evidence" value="ECO:0007669"/>
    <property type="project" value="UniProtKB-UniRule"/>
</dbReference>
<dbReference type="GO" id="GO:0051028">
    <property type="term" value="P:mRNA transport"/>
    <property type="evidence" value="ECO:0007669"/>
    <property type="project" value="UniProtKB-UniRule"/>
</dbReference>
<dbReference type="GO" id="GO:0016032">
    <property type="term" value="P:viral process"/>
    <property type="evidence" value="ECO:0007669"/>
    <property type="project" value="UniProtKB-UniRule"/>
</dbReference>
<dbReference type="Gene3D" id="6.10.140.630">
    <property type="match status" value="1"/>
</dbReference>
<dbReference type="HAMAP" id="MF_04077">
    <property type="entry name" value="REV_HIV1"/>
    <property type="match status" value="1"/>
</dbReference>
<dbReference type="InterPro" id="IPR000625">
    <property type="entry name" value="REV_protein"/>
</dbReference>
<dbReference type="Pfam" id="PF00424">
    <property type="entry name" value="REV"/>
    <property type="match status" value="1"/>
</dbReference>
<proteinExistence type="inferred from homology"/>
<reference key="1">
    <citation type="journal article" date="1989" name="Gene">
        <title>Nucleotide sequence of HIV1-NDK: a highly cytopathic strain of the human immunodeficiency virus.</title>
        <authorList>
            <person name="Spire B."/>
            <person name="Sire J."/>
            <person name="Zachar V."/>
            <person name="Rey F."/>
            <person name="Barre-Sinoussi F."/>
            <person name="Galibert F."/>
            <person name="Hampe A."/>
            <person name="Chermann J.C."/>
        </authorList>
    </citation>
    <scope>NUCLEOTIDE SEQUENCE [GENOMIC DNA]</scope>
</reference>
<reference key="2">
    <citation type="journal article" date="1999" name="Arch. Biochem. Biophys.">
        <title>The ins and outs of HIV Rev.</title>
        <authorList>
            <person name="Hope T.J."/>
        </authorList>
    </citation>
    <scope>REVIEW</scope>
</reference>
<gene>
    <name evidence="1" type="primary">rev</name>
</gene>
<organismHost>
    <name type="scientific">Homo sapiens</name>
    <name type="common">Human</name>
    <dbReference type="NCBI Taxonomy" id="9606"/>
</organismHost>
<comment type="function">
    <text evidence="1">Escorts unspliced or incompletely spliced viral pre-mRNAs (late transcripts) out of the nucleus of infected cells. These pre-mRNAs carry a recognition sequence called Rev responsive element (RRE) located in the env gene, that is not present in fully spliced viral mRNAs (early transcripts). This function is essential since most viral proteins are translated from unspliced or partially spliced pre-mRNAs which cannot exit the nucleus by the pathway used by fully processed cellular mRNAs. Rev itself is translated from a fully spliced mRNA that readily exits the nucleus. Rev's nuclear localization signal (NLS) binds directly to KPNB1/Importin beta-1 without previous binding to KPNA1/Importin alpha-1. KPNB1 binds to the GDP bound form of RAN (Ran-GDP) and targets Rev to the nucleus. In the nucleus, the conversion from Ran-GDP to Ran-GTP dissociates Rev from KPNB1 and allows Rev's binding to the RRE in viral pre-mRNAs. Rev multimerization on the RRE via cooperative assembly exposes its nuclear export signal (NES) to the surface. Rev can then form a complex with XPO1/CRM1 and Ran-GTP, leading to nuclear export of the complex. Conversion from Ran-GTP to Ran-GDP mediates dissociation of the Rev/RRE/XPO1/RAN complex, so that Rev can return to the nucleus for a subsequent round of export. Beside KPNB1, also seems to interact with TNPO1/Transportin-1, RANBP5/IPO5 and IPO7/RANBP7 for nuclear import. The nucleoporin-like HRB/RIP is an essential cofactor that probably indirectly interacts with Rev to release HIV RNAs from the perinuclear region to the cytoplasm.</text>
</comment>
<comment type="subunit">
    <text evidence="1">Homomultimer; when bound to the RRE. Multimeric assembly is essential for activity and may involve XPO1. Binds to human KPNB1, XPO1, TNPO1, RANBP5 and IPO7. Interacts with the viral Integrase. Interacts with human KHDRBS1. Interacts with human NAP1; this interaction decreases Rev multimerization and stimulates its activity. Interacts with human DEAD-box helicases DDX3 and DDX24; these interactions may serve for viral RNA export to the cytoplasm and packaging, respectively. Interacts with human PSIP1; this interaction may inhibit HIV-1 DNA integration by promoting dissociation of the Integrase-LEDGF/p75 complex.</text>
</comment>
<comment type="subcellular location">
    <subcellularLocation>
        <location evidence="1">Host nucleus</location>
        <location evidence="1">Host nucleolus</location>
    </subcellularLocation>
    <subcellularLocation>
        <location evidence="1">Host cytoplasm</location>
    </subcellularLocation>
    <text evidence="1">The presence of both nuclear import and nuclear export signals leads to continuous shuttling between the nucleus and cytoplasm.</text>
</comment>
<comment type="domain">
    <text evidence="1">The RNA-binding motif binds to the RRE, a 240 bp stem-and-loop structure present in incompletely spliced viral pre-mRNAs. This region also contains the NLS which mediates nuclear localization via KPNB1 binding and, when the N-terminal sequence is present, nucleolar targeting. These overlapping functions prevent Rev bound to RRE from undesirable return to the nucleus. When Rev binds the RRE, the NLS becomes masked while the NES remains accessible. The leucine-rich NES mediates binding to human XPO1.</text>
</comment>
<comment type="PTM">
    <text evidence="1">Asymmetrically arginine dimethylated at one site by host PRMT6. Methylation impairs the RNA-binding activity and export of viral RNA from the nucleus to the cytoplasm.</text>
</comment>
<comment type="PTM">
    <text evidence="1">Phosphorylated by protein kinase CK2. Presence of, and maybe binding to the N-terminus of the regulatory beta subunit of CK2 is necessary for CK2-mediated Rev's phosphorylation.</text>
</comment>
<comment type="miscellaneous">
    <text>NDK, isolated from a Zairean patient infected with AIDS, and is a highly cytopathogenic strain.</text>
</comment>
<comment type="miscellaneous">
    <text evidence="1">HIV-1 lineages are divided in three main groups, M (for Major), O (for Outlier), and N (for New, or Non-M, Non-O). The vast majority of strains found worldwide belong to the group M. Group O seems to be endemic to and largely confined to Cameroon and neighboring countries in West Central Africa, where these viruses represent a small minority of HIV-1 strains. The group N is represented by a limited number of isolates from Cameroonian persons. The group M is further subdivided in 9 clades or subtypes (A to D, F to H, J and K).</text>
</comment>
<comment type="similarity">
    <text evidence="1">Belongs to the HIV-1 REV protein family.</text>
</comment>
<organism>
    <name type="scientific">Human immunodeficiency virus type 1 group M subtype D (isolate NDK)</name>
    <name type="common">HIV-1</name>
    <dbReference type="NCBI Taxonomy" id="11695"/>
    <lineage>
        <taxon>Viruses</taxon>
        <taxon>Riboviria</taxon>
        <taxon>Pararnavirae</taxon>
        <taxon>Artverviricota</taxon>
        <taxon>Revtraviricetes</taxon>
        <taxon>Ortervirales</taxon>
        <taxon>Retroviridae</taxon>
        <taxon>Orthoretrovirinae</taxon>
        <taxon>Lentivirus</taxon>
        <taxon>Human immunodeficiency virus type 1</taxon>
    </lineage>
</organism>
<accession>P18803</accession>
<protein>
    <recommendedName>
        <fullName evidence="1">Protein Rev</fullName>
    </recommendedName>
    <alternativeName>
        <fullName evidence="1">ART/TRS</fullName>
    </alternativeName>
    <alternativeName>
        <fullName evidence="1">Anti-repression transactivator</fullName>
    </alternativeName>
    <alternativeName>
        <fullName evidence="1">Regulator of expression of viral proteins</fullName>
    </alternativeName>
</protein>
<feature type="chain" id="PRO_0000085270" description="Protein Rev">
    <location>
        <begin position="1"/>
        <end position="116"/>
    </location>
</feature>
<feature type="region of interest" description="Homomultimerization" evidence="1">
    <location>
        <begin position="18"/>
        <end position="26"/>
    </location>
</feature>
<feature type="region of interest" description="Disordered" evidence="2">
    <location>
        <begin position="23"/>
        <end position="48"/>
    </location>
</feature>
<feature type="region of interest" description="Disordered" evidence="2">
    <location>
        <begin position="90"/>
        <end position="116"/>
    </location>
</feature>
<feature type="short sequence motif" description="Nuclear localization signal and RNA-binding (RRE)" evidence="1">
    <location>
        <begin position="34"/>
        <end position="50"/>
    </location>
</feature>
<feature type="short sequence motif" description="Nuclear export signal and binding to XPO1" evidence="1">
    <location>
        <begin position="73"/>
        <end position="84"/>
    </location>
</feature>
<feature type="compositionally biased region" description="Basic residues" evidence="2">
    <location>
        <begin position="36"/>
        <end position="48"/>
    </location>
</feature>
<feature type="modified residue" description="Phosphoserine; by host CK2" evidence="1">
    <location>
        <position position="5"/>
    </location>
</feature>
<feature type="modified residue" description="Phosphoserine; by host CK2" evidence="1">
    <location>
        <position position="8"/>
    </location>
</feature>
<feature type="modified residue" description="Phosphoserine; by host" evidence="1">
    <location>
        <position position="92"/>
    </location>
</feature>
<feature type="modified residue" description="Phosphoserine; by host" evidence="1">
    <location>
        <position position="99"/>
    </location>
</feature>